<gene>
    <name evidence="1" type="primary">guaAB</name>
    <name type="ordered locus">Hlac_2593</name>
</gene>
<name>GUAAB_HALLT</name>
<organism>
    <name type="scientific">Halorubrum lacusprofundi (strain ATCC 49239 / DSM 5036 / JCM 8891 / ACAM 34)</name>
    <dbReference type="NCBI Taxonomy" id="416348"/>
    <lineage>
        <taxon>Archaea</taxon>
        <taxon>Methanobacteriati</taxon>
        <taxon>Methanobacteriota</taxon>
        <taxon>Stenosarchaea group</taxon>
        <taxon>Halobacteria</taxon>
        <taxon>Halobacteriales</taxon>
        <taxon>Haloferacaceae</taxon>
        <taxon>Halorubrum</taxon>
    </lineage>
</organism>
<comment type="function">
    <text evidence="1">Catalyzes the synthesis of GMP from XMP.</text>
</comment>
<comment type="catalytic activity">
    <reaction evidence="1">
        <text>XMP + L-glutamine + ATP + H2O = GMP + L-glutamate + AMP + diphosphate + 2 H(+)</text>
        <dbReference type="Rhea" id="RHEA:11680"/>
        <dbReference type="ChEBI" id="CHEBI:15377"/>
        <dbReference type="ChEBI" id="CHEBI:15378"/>
        <dbReference type="ChEBI" id="CHEBI:29985"/>
        <dbReference type="ChEBI" id="CHEBI:30616"/>
        <dbReference type="ChEBI" id="CHEBI:33019"/>
        <dbReference type="ChEBI" id="CHEBI:57464"/>
        <dbReference type="ChEBI" id="CHEBI:58115"/>
        <dbReference type="ChEBI" id="CHEBI:58359"/>
        <dbReference type="ChEBI" id="CHEBI:456215"/>
        <dbReference type="EC" id="6.3.5.2"/>
    </reaction>
</comment>
<comment type="pathway">
    <text evidence="1">Purine metabolism; GMP biosynthesis; GMP from XMP (L-Gln route): step 1/1.</text>
</comment>
<comment type="subunit">
    <text evidence="1">Heterodimer composed of a glutamine amidotransferase subunit (A) and a GMP-binding subunit (B).</text>
</comment>
<accession>B9LTX1</accession>
<reference key="1">
    <citation type="journal article" date="2016" name="Stand. Genomic Sci.">
        <title>Complete genome sequence of the Antarctic Halorubrum lacusprofundi type strain ACAM 34.</title>
        <authorList>
            <person name="Anderson I.J."/>
            <person name="DasSarma P."/>
            <person name="Lucas S."/>
            <person name="Copeland A."/>
            <person name="Lapidus A."/>
            <person name="Del Rio T.G."/>
            <person name="Tice H."/>
            <person name="Dalin E."/>
            <person name="Bruce D.C."/>
            <person name="Goodwin L."/>
            <person name="Pitluck S."/>
            <person name="Sims D."/>
            <person name="Brettin T.S."/>
            <person name="Detter J.C."/>
            <person name="Han C.S."/>
            <person name="Larimer F."/>
            <person name="Hauser L."/>
            <person name="Land M."/>
            <person name="Ivanova N."/>
            <person name="Richardson P."/>
            <person name="Cavicchioli R."/>
            <person name="DasSarma S."/>
            <person name="Woese C.R."/>
            <person name="Kyrpides N.C."/>
        </authorList>
    </citation>
    <scope>NUCLEOTIDE SEQUENCE [LARGE SCALE GENOMIC DNA]</scope>
    <source>
        <strain>ATCC 49239 / DSM 5036 / JCM 8891 / ACAM 34</strain>
    </source>
</reference>
<proteinExistence type="inferred from homology"/>
<feature type="chain" id="PRO_1000133393" description="GMP synthase [glutamine-hydrolyzing] subunit B">
    <location>
        <begin position="1"/>
        <end position="305"/>
    </location>
</feature>
<feature type="domain" description="GMPS ATP-PPase" evidence="1">
    <location>
        <begin position="2"/>
        <end position="185"/>
    </location>
</feature>
<feature type="binding site" evidence="1">
    <location>
        <begin position="29"/>
        <end position="35"/>
    </location>
    <ligand>
        <name>ATP</name>
        <dbReference type="ChEBI" id="CHEBI:30616"/>
    </ligand>
</feature>
<evidence type="ECO:0000255" key="1">
    <source>
        <dbReference type="HAMAP-Rule" id="MF_00345"/>
    </source>
</evidence>
<protein>
    <recommendedName>
        <fullName evidence="1">GMP synthase [glutamine-hydrolyzing] subunit B</fullName>
        <ecNumber evidence="1">6.3.5.2</ecNumber>
    </recommendedName>
    <alternativeName>
        <fullName evidence="1">GMP synthetase</fullName>
    </alternativeName>
</protein>
<dbReference type="EC" id="6.3.5.2" evidence="1"/>
<dbReference type="EMBL" id="CP001365">
    <property type="protein sequence ID" value="ACM58165.1"/>
    <property type="molecule type" value="Genomic_DNA"/>
</dbReference>
<dbReference type="RefSeq" id="WP_015911277.1">
    <property type="nucleotide sequence ID" value="NC_012029.1"/>
</dbReference>
<dbReference type="SMR" id="B9LTX1"/>
<dbReference type="GeneID" id="7399818"/>
<dbReference type="KEGG" id="hla:Hlac_2593"/>
<dbReference type="eggNOG" id="arCOG00085">
    <property type="taxonomic scope" value="Archaea"/>
</dbReference>
<dbReference type="HOGENOM" id="CLU_014340_0_0_2"/>
<dbReference type="UniPathway" id="UPA00189">
    <property type="reaction ID" value="UER00296"/>
</dbReference>
<dbReference type="Proteomes" id="UP000000740">
    <property type="component" value="Chromosome 1"/>
</dbReference>
<dbReference type="GO" id="GO:0005829">
    <property type="term" value="C:cytosol"/>
    <property type="evidence" value="ECO:0007669"/>
    <property type="project" value="TreeGrafter"/>
</dbReference>
<dbReference type="GO" id="GO:0005524">
    <property type="term" value="F:ATP binding"/>
    <property type="evidence" value="ECO:0007669"/>
    <property type="project" value="UniProtKB-UniRule"/>
</dbReference>
<dbReference type="GO" id="GO:0003921">
    <property type="term" value="F:GMP synthase activity"/>
    <property type="evidence" value="ECO:0007669"/>
    <property type="project" value="InterPro"/>
</dbReference>
<dbReference type="CDD" id="cd01997">
    <property type="entry name" value="GMP_synthase_C"/>
    <property type="match status" value="1"/>
</dbReference>
<dbReference type="FunFam" id="3.40.50.620:FF:000208">
    <property type="entry name" value="GMP synthase [glutamine-hydrolyzing] subunit B"/>
    <property type="match status" value="1"/>
</dbReference>
<dbReference type="Gene3D" id="3.30.300.10">
    <property type="match status" value="1"/>
</dbReference>
<dbReference type="Gene3D" id="3.40.50.620">
    <property type="entry name" value="HUPs"/>
    <property type="match status" value="1"/>
</dbReference>
<dbReference type="HAMAP" id="MF_00345">
    <property type="entry name" value="GMP_synthase_B"/>
    <property type="match status" value="1"/>
</dbReference>
<dbReference type="InterPro" id="IPR001674">
    <property type="entry name" value="GMP_synth_C"/>
</dbReference>
<dbReference type="InterPro" id="IPR026598">
    <property type="entry name" value="GMP_synthase_B"/>
</dbReference>
<dbReference type="InterPro" id="IPR025777">
    <property type="entry name" value="GMPS_ATP_PPase_dom"/>
</dbReference>
<dbReference type="InterPro" id="IPR022310">
    <property type="entry name" value="NAD/GMP_synthase"/>
</dbReference>
<dbReference type="InterPro" id="IPR014729">
    <property type="entry name" value="Rossmann-like_a/b/a_fold"/>
</dbReference>
<dbReference type="NCBIfam" id="TIGR00884">
    <property type="entry name" value="guaA_Cterm"/>
    <property type="match status" value="1"/>
</dbReference>
<dbReference type="PANTHER" id="PTHR11922:SF2">
    <property type="entry name" value="GMP SYNTHASE [GLUTAMINE-HYDROLYZING]"/>
    <property type="match status" value="1"/>
</dbReference>
<dbReference type="PANTHER" id="PTHR11922">
    <property type="entry name" value="GMP SYNTHASE-RELATED"/>
    <property type="match status" value="1"/>
</dbReference>
<dbReference type="Pfam" id="PF00958">
    <property type="entry name" value="GMP_synt_C"/>
    <property type="match status" value="1"/>
</dbReference>
<dbReference type="Pfam" id="PF02540">
    <property type="entry name" value="NAD_synthase"/>
    <property type="match status" value="1"/>
</dbReference>
<dbReference type="SUPFAM" id="SSF52402">
    <property type="entry name" value="Adenine nucleotide alpha hydrolases-like"/>
    <property type="match status" value="1"/>
</dbReference>
<dbReference type="SUPFAM" id="SSF54810">
    <property type="entry name" value="GMP synthetase C-terminal dimerisation domain"/>
    <property type="match status" value="1"/>
</dbReference>
<dbReference type="PROSITE" id="PS51553">
    <property type="entry name" value="GMPS_ATP_PPASE"/>
    <property type="match status" value="1"/>
</dbReference>
<keyword id="KW-0067">ATP-binding</keyword>
<keyword id="KW-0332">GMP biosynthesis</keyword>
<keyword id="KW-0436">Ligase</keyword>
<keyword id="KW-0547">Nucleotide-binding</keyword>
<keyword id="KW-0658">Purine biosynthesis</keyword>
<keyword id="KW-1185">Reference proteome</keyword>
<sequence length="305" mass="33646">MVETEEFIAEAKAEIREAIGDANAVIALSGGVDSSVAATLAYEAVGDQLTPVYVDTGLMRKGETEEIRETFSFMESLRVIEAQERFFDRLAGVTDPEEKRHVIGEGFIDEFETVANDVGADYLVQGTIYPDRIESEGNIKSHHNVGGLPDIVDFEGIVEPVRDLYKDEVREVARALGLEEVISERMPFPGPGLAVRIVGEVTPEKAAVAREATHVVEEELEEYDPWQAFAAVLGKATGVKGDNRVHGWVVAVRSVESRDGMTARAQELDWSTLQRIQSRITGENENVARVVYDVTHKPPATIEYE</sequence>